<organism>
    <name type="scientific">Eremothecium gossypii (strain ATCC 10895 / CBS 109.51 / FGSC 9923 / NRRL Y-1056)</name>
    <name type="common">Yeast</name>
    <name type="synonym">Ashbya gossypii</name>
    <dbReference type="NCBI Taxonomy" id="284811"/>
    <lineage>
        <taxon>Eukaryota</taxon>
        <taxon>Fungi</taxon>
        <taxon>Dikarya</taxon>
        <taxon>Ascomycota</taxon>
        <taxon>Saccharomycotina</taxon>
        <taxon>Saccharomycetes</taxon>
        <taxon>Saccharomycetales</taxon>
        <taxon>Saccharomycetaceae</taxon>
        <taxon>Eremothecium</taxon>
    </lineage>
</organism>
<name>SYF1_EREGS</name>
<feature type="chain" id="PRO_0000205725" description="Pre-mRNA-splicing factor SYF1">
    <location>
        <begin position="1"/>
        <end position="803"/>
    </location>
</feature>
<feature type="repeat" description="HAT 1">
    <location>
        <begin position="3"/>
        <end position="34"/>
    </location>
</feature>
<feature type="repeat" description="HAT 2">
    <location>
        <begin position="35"/>
        <end position="67"/>
    </location>
</feature>
<feature type="repeat" description="HAT 3">
    <location>
        <begin position="79"/>
        <end position="111"/>
    </location>
</feature>
<feature type="repeat" description="HAT 4">
    <location>
        <begin position="113"/>
        <end position="147"/>
    </location>
</feature>
<feature type="repeat" description="HAT 5">
    <location>
        <begin position="393"/>
        <end position="425"/>
    </location>
</feature>
<feature type="repeat" description="HAT 6">
    <location>
        <begin position="427"/>
        <end position="463"/>
    </location>
</feature>
<feature type="repeat" description="HAT 7">
    <location>
        <begin position="482"/>
        <end position="519"/>
    </location>
</feature>
<feature type="repeat" description="HAT 8">
    <location>
        <begin position="525"/>
        <end position="557"/>
    </location>
</feature>
<feature type="repeat" description="HAT 9">
    <location>
        <begin position="559"/>
        <end position="593"/>
    </location>
</feature>
<feature type="repeat" description="HAT 10">
    <location>
        <begin position="596"/>
        <end position="631"/>
    </location>
</feature>
<feature type="repeat" description="HAT 11">
    <location>
        <begin position="633"/>
        <end position="668"/>
    </location>
</feature>
<feature type="repeat" description="HAT 12">
    <location>
        <begin position="670"/>
        <end position="704"/>
    </location>
</feature>
<feature type="repeat" description="HAT 13">
    <location>
        <begin position="708"/>
        <end position="740"/>
    </location>
</feature>
<sequence length="803" mass="91802">MDEFVTAEDLVHEYSVLQEPDSVVNWSRYIAAKRDDPCSVSWVYERCLQALPAQWEVWREYLQFRMRLLDGVCAVQHAAEFEKVNRLFWRCVEHNAAVVEAWRLFLGHAQRQGALALVRQVVDAALRGVGLAKHRTVWEDVVAYIEELLPAEETDLGEEQDLHELVRGALFGGAGAEDAGADIWSSAMLRRYIQVAEDAEAVLALLQRTHDYATVVAVYEKHVLPVTRAKHKGRQSYESQFRYLVALDHTGATAKLEDAVARCAQLFPERAPSLTIFLAKHYVKQGNYNRCTDVLTDSLKHTAKSSEFASLYDFLVVFEESLIEVVLEHLQEHPENEERWGADLERHTDQLDGLLADHALLLNDLKLRQEPDNVKHWLDRVELFDKAASKASVYADAIASINYKSQTVPGQLGTLWWQYAQLYIDDGQYETAKTILDKALNVPYNFLQDPELIWTKWAEEELKRAGLDAAMQVLSHALQIPDDHELLRDKFESHEKMPAQTVIFSSLKLWSFYIDLLEASSESDEHLERTKAAYEATIQLKIATPLLFVNYAHYLQDKGNHVESFSIYERAVDIFPAETAFEIWDIYIGEALKYGLPKEQIRDLFESSLKMANEGVECKPFFLLYAKFERDNGMIETAANILHRACRAAQTMDAKRSLWTLCLNWCRQELGGSYARALYEECIQALPNHVAVVYVLEYAKVEEGLKQVKRARALLQYGARLLHPANNADLWEYWELFELRHGNKDTYKDMLQLKRKVEELLEGDGLPVPNQIGNIAFVASTDGLQNPGGESTNINNDELELDM</sequence>
<keyword id="KW-0507">mRNA processing</keyword>
<keyword id="KW-0508">mRNA splicing</keyword>
<keyword id="KW-0539">Nucleus</keyword>
<keyword id="KW-1185">Reference proteome</keyword>
<keyword id="KW-0677">Repeat</keyword>
<keyword id="KW-0747">Spliceosome</keyword>
<comment type="function">
    <text evidence="1">Involved in pre-mRNA splicing and cell cycle progression.</text>
</comment>
<comment type="subunit">
    <text evidence="1">Associated with the spliceosome.</text>
</comment>
<comment type="subcellular location">
    <subcellularLocation>
        <location evidence="1">Nucleus</location>
    </subcellularLocation>
</comment>
<comment type="similarity">
    <text evidence="2">Belongs to the crooked-neck family.</text>
</comment>
<accession>Q75EF0</accession>
<protein>
    <recommendedName>
        <fullName>Pre-mRNA-splicing factor SYF1</fullName>
    </recommendedName>
</protein>
<reference key="1">
    <citation type="journal article" date="2004" name="Science">
        <title>The Ashbya gossypii genome as a tool for mapping the ancient Saccharomyces cerevisiae genome.</title>
        <authorList>
            <person name="Dietrich F.S."/>
            <person name="Voegeli S."/>
            <person name="Brachat S."/>
            <person name="Lerch A."/>
            <person name="Gates K."/>
            <person name="Steiner S."/>
            <person name="Mohr C."/>
            <person name="Poehlmann R."/>
            <person name="Luedi P."/>
            <person name="Choi S."/>
            <person name="Wing R.A."/>
            <person name="Flavier A."/>
            <person name="Gaffney T.D."/>
            <person name="Philippsen P."/>
        </authorList>
    </citation>
    <scope>NUCLEOTIDE SEQUENCE [LARGE SCALE GENOMIC DNA]</scope>
    <source>
        <strain>ATCC 10895 / CBS 109.51 / FGSC 9923 / NRRL Y-1056</strain>
    </source>
</reference>
<reference key="2">
    <citation type="journal article" date="2013" name="G3 (Bethesda)">
        <title>Genomes of Ashbya fungi isolated from insects reveal four mating-type loci, numerous translocations, lack of transposons, and distinct gene duplications.</title>
        <authorList>
            <person name="Dietrich F.S."/>
            <person name="Voegeli S."/>
            <person name="Kuo S."/>
            <person name="Philippsen P."/>
        </authorList>
    </citation>
    <scope>GENOME REANNOTATION</scope>
    <scope>SEQUENCE REVISION TO 355</scope>
    <source>
        <strain>ATCC 10895 / CBS 109.51 / FGSC 9923 / NRRL Y-1056</strain>
    </source>
</reference>
<proteinExistence type="inferred from homology"/>
<evidence type="ECO:0000250" key="1"/>
<evidence type="ECO:0000305" key="2"/>
<dbReference type="EMBL" id="AE016814">
    <property type="protein sequence ID" value="AAS50497.2"/>
    <property type="molecule type" value="Genomic_DNA"/>
</dbReference>
<dbReference type="RefSeq" id="NP_982673.2">
    <property type="nucleotide sequence ID" value="NM_208026.2"/>
</dbReference>
<dbReference type="SMR" id="Q75EF0"/>
<dbReference type="FunCoup" id="Q75EF0">
    <property type="interactions" value="1123"/>
</dbReference>
<dbReference type="STRING" id="284811.Q75EF0"/>
<dbReference type="EnsemblFungi" id="AAS50497">
    <property type="protein sequence ID" value="AAS50497"/>
    <property type="gene ID" value="AGOS_AAR131W"/>
</dbReference>
<dbReference type="GeneID" id="4618715"/>
<dbReference type="KEGG" id="ago:AGOS_AAR131W"/>
<dbReference type="eggNOG" id="KOG2047">
    <property type="taxonomic scope" value="Eukaryota"/>
</dbReference>
<dbReference type="HOGENOM" id="CLU_007736_0_0_1"/>
<dbReference type="InParanoid" id="Q75EF0"/>
<dbReference type="OMA" id="IWYNYLR"/>
<dbReference type="OrthoDB" id="10067343at2759"/>
<dbReference type="Proteomes" id="UP000000591">
    <property type="component" value="Chromosome I"/>
</dbReference>
<dbReference type="GO" id="GO:0005829">
    <property type="term" value="C:cytosol"/>
    <property type="evidence" value="ECO:0007669"/>
    <property type="project" value="EnsemblFungi"/>
</dbReference>
<dbReference type="GO" id="GO:0071014">
    <property type="term" value="C:post-mRNA release spliceosomal complex"/>
    <property type="evidence" value="ECO:0000318"/>
    <property type="project" value="GO_Central"/>
</dbReference>
<dbReference type="GO" id="GO:0000974">
    <property type="term" value="C:Prp19 complex"/>
    <property type="evidence" value="ECO:0000318"/>
    <property type="project" value="GO_Central"/>
</dbReference>
<dbReference type="GO" id="GO:0071006">
    <property type="term" value="C:U2-type catalytic step 1 spliceosome"/>
    <property type="evidence" value="ECO:0007669"/>
    <property type="project" value="EnsemblFungi"/>
</dbReference>
<dbReference type="GO" id="GO:0071007">
    <property type="term" value="C:U2-type catalytic step 2 spliceosome"/>
    <property type="evidence" value="ECO:0000318"/>
    <property type="project" value="GO_Central"/>
</dbReference>
<dbReference type="GO" id="GO:0071008">
    <property type="term" value="C:U2-type post-mRNA release spliceosomal complex"/>
    <property type="evidence" value="ECO:0007669"/>
    <property type="project" value="EnsemblFungi"/>
</dbReference>
<dbReference type="GO" id="GO:0071004">
    <property type="term" value="C:U2-type prespliceosome"/>
    <property type="evidence" value="ECO:0007669"/>
    <property type="project" value="EnsemblFungi"/>
</dbReference>
<dbReference type="GO" id="GO:0000349">
    <property type="term" value="P:generation of catalytic spliceosome for first transesterification step"/>
    <property type="evidence" value="ECO:0000318"/>
    <property type="project" value="GO_Central"/>
</dbReference>
<dbReference type="GO" id="GO:0000398">
    <property type="term" value="P:mRNA splicing, via spliceosome"/>
    <property type="evidence" value="ECO:0000318"/>
    <property type="project" value="GO_Central"/>
</dbReference>
<dbReference type="Gene3D" id="1.25.40.10">
    <property type="entry name" value="Tetratricopeptide repeat domain"/>
    <property type="match status" value="2"/>
</dbReference>
<dbReference type="InterPro" id="IPR003107">
    <property type="entry name" value="HAT"/>
</dbReference>
<dbReference type="InterPro" id="IPR055433">
    <property type="entry name" value="HAT_Syf1-like_N"/>
</dbReference>
<dbReference type="InterPro" id="IPR056350">
    <property type="entry name" value="HAT_Syf1_central"/>
</dbReference>
<dbReference type="InterPro" id="IPR055430">
    <property type="entry name" value="HAT_Syf1_CNRKL1_C"/>
</dbReference>
<dbReference type="InterPro" id="IPR045075">
    <property type="entry name" value="Syf1-like"/>
</dbReference>
<dbReference type="InterPro" id="IPR011990">
    <property type="entry name" value="TPR-like_helical_dom_sf"/>
</dbReference>
<dbReference type="PANTHER" id="PTHR11246">
    <property type="entry name" value="PRE-MRNA SPLICING FACTOR"/>
    <property type="match status" value="1"/>
</dbReference>
<dbReference type="PANTHER" id="PTHR11246:SF5">
    <property type="entry name" value="PRE-MRNA-SPLICING FACTOR SYF1"/>
    <property type="match status" value="1"/>
</dbReference>
<dbReference type="Pfam" id="PF23231">
    <property type="entry name" value="HAT_Syf1_CNRKL1_C"/>
    <property type="match status" value="1"/>
</dbReference>
<dbReference type="Pfam" id="PF23233">
    <property type="entry name" value="HAT_Syf1_CNRKL1_N"/>
    <property type="match status" value="1"/>
</dbReference>
<dbReference type="Pfam" id="PF23220">
    <property type="entry name" value="HAT_Syf1_M"/>
    <property type="match status" value="1"/>
</dbReference>
<dbReference type="SMART" id="SM00386">
    <property type="entry name" value="HAT"/>
    <property type="match status" value="8"/>
</dbReference>
<dbReference type="SUPFAM" id="SSF48452">
    <property type="entry name" value="TPR-like"/>
    <property type="match status" value="3"/>
</dbReference>
<gene>
    <name type="primary">SYF1</name>
    <name type="ordered locus">AAR131W</name>
</gene>